<feature type="chain" id="PRO_1000215815" description="Fe/S biogenesis protein NfuA">
    <location>
        <begin position="1"/>
        <end position="191"/>
    </location>
</feature>
<feature type="binding site" evidence="1">
    <location>
        <position position="149"/>
    </location>
    <ligand>
        <name>[4Fe-4S] cluster</name>
        <dbReference type="ChEBI" id="CHEBI:49883"/>
    </ligand>
</feature>
<feature type="binding site" evidence="1">
    <location>
        <position position="152"/>
    </location>
    <ligand>
        <name>[4Fe-4S] cluster</name>
        <dbReference type="ChEBI" id="CHEBI:49883"/>
    </ligand>
</feature>
<dbReference type="EMBL" id="CP001277">
    <property type="protein sequence ID" value="ACQ67298.1"/>
    <property type="molecule type" value="Genomic_DNA"/>
</dbReference>
<dbReference type="RefSeq" id="WP_015873122.1">
    <property type="nucleotide sequence ID" value="NC_012751.1"/>
</dbReference>
<dbReference type="SMR" id="C4K405"/>
<dbReference type="STRING" id="572265.HDEF_0545"/>
<dbReference type="GeneID" id="66260426"/>
<dbReference type="KEGG" id="hde:HDEF_0545"/>
<dbReference type="eggNOG" id="COG0316">
    <property type="taxonomic scope" value="Bacteria"/>
</dbReference>
<dbReference type="eggNOG" id="COG0694">
    <property type="taxonomic scope" value="Bacteria"/>
</dbReference>
<dbReference type="HOGENOM" id="CLU_094569_0_0_6"/>
<dbReference type="Proteomes" id="UP000002334">
    <property type="component" value="Chromosome"/>
</dbReference>
<dbReference type="GO" id="GO:0051539">
    <property type="term" value="F:4 iron, 4 sulfur cluster binding"/>
    <property type="evidence" value="ECO:0007669"/>
    <property type="project" value="UniProtKB-UniRule"/>
</dbReference>
<dbReference type="GO" id="GO:0005506">
    <property type="term" value="F:iron ion binding"/>
    <property type="evidence" value="ECO:0007669"/>
    <property type="project" value="InterPro"/>
</dbReference>
<dbReference type="GO" id="GO:0016226">
    <property type="term" value="P:iron-sulfur cluster assembly"/>
    <property type="evidence" value="ECO:0007669"/>
    <property type="project" value="UniProtKB-UniRule"/>
</dbReference>
<dbReference type="GO" id="GO:0051604">
    <property type="term" value="P:protein maturation"/>
    <property type="evidence" value="ECO:0007669"/>
    <property type="project" value="UniProtKB-UniRule"/>
</dbReference>
<dbReference type="Gene3D" id="3.30.300.130">
    <property type="entry name" value="Fe-S cluster assembly (FSCA)"/>
    <property type="match status" value="1"/>
</dbReference>
<dbReference type="Gene3D" id="2.60.300.12">
    <property type="entry name" value="HesB-like domain"/>
    <property type="match status" value="1"/>
</dbReference>
<dbReference type="HAMAP" id="MF_01637">
    <property type="entry name" value="Fe_S_biogen_NfuA"/>
    <property type="match status" value="1"/>
</dbReference>
<dbReference type="InterPro" id="IPR017726">
    <property type="entry name" value="Fe/S_biogenesis_protein_NfuA"/>
</dbReference>
<dbReference type="InterPro" id="IPR000361">
    <property type="entry name" value="FeS_biogenesis"/>
</dbReference>
<dbReference type="InterPro" id="IPR034904">
    <property type="entry name" value="FSCA_dom_sf"/>
</dbReference>
<dbReference type="InterPro" id="IPR035903">
    <property type="entry name" value="HesB-like_dom_sf"/>
</dbReference>
<dbReference type="InterPro" id="IPR001075">
    <property type="entry name" value="NIF_FeS_clus_asmbl_NifU_C"/>
</dbReference>
<dbReference type="NCBIfam" id="NF008392">
    <property type="entry name" value="PRK11190.1"/>
    <property type="match status" value="1"/>
</dbReference>
<dbReference type="NCBIfam" id="TIGR03341">
    <property type="entry name" value="YhgI_GntY"/>
    <property type="match status" value="1"/>
</dbReference>
<dbReference type="PANTHER" id="PTHR11178:SF51">
    <property type="entry name" value="FE_S BIOGENESIS PROTEIN NFUA"/>
    <property type="match status" value="1"/>
</dbReference>
<dbReference type="PANTHER" id="PTHR11178">
    <property type="entry name" value="IRON-SULFUR CLUSTER SCAFFOLD PROTEIN NFU-RELATED"/>
    <property type="match status" value="1"/>
</dbReference>
<dbReference type="Pfam" id="PF01521">
    <property type="entry name" value="Fe-S_biosyn"/>
    <property type="match status" value="1"/>
</dbReference>
<dbReference type="Pfam" id="PF01106">
    <property type="entry name" value="NifU"/>
    <property type="match status" value="1"/>
</dbReference>
<dbReference type="SUPFAM" id="SSF117916">
    <property type="entry name" value="Fe-S cluster assembly (FSCA) domain-like"/>
    <property type="match status" value="1"/>
</dbReference>
<dbReference type="SUPFAM" id="SSF89360">
    <property type="entry name" value="HesB-like domain"/>
    <property type="match status" value="1"/>
</dbReference>
<protein>
    <recommendedName>
        <fullName evidence="1">Fe/S biogenesis protein NfuA</fullName>
    </recommendedName>
</protein>
<reference key="1">
    <citation type="journal article" date="2009" name="Proc. Natl. Acad. Sci. U.S.A.">
        <title>Hamiltonella defensa, genome evolution of protective bacterial endosymbiont from pathogenic ancestors.</title>
        <authorList>
            <person name="Degnan P.H."/>
            <person name="Yu Y."/>
            <person name="Sisneros N."/>
            <person name="Wing R.A."/>
            <person name="Moran N.A."/>
        </authorList>
    </citation>
    <scope>NUCLEOTIDE SEQUENCE [LARGE SCALE GENOMIC DNA]</scope>
    <source>
        <strain>5AT</strain>
    </source>
</reference>
<keyword id="KW-0004">4Fe-4S</keyword>
<keyword id="KW-0408">Iron</keyword>
<keyword id="KW-0411">Iron-sulfur</keyword>
<keyword id="KW-0479">Metal-binding</keyword>
<gene>
    <name evidence="1" type="primary">nfuA</name>
    <name type="ordered locus">HDEF_0545</name>
</gene>
<organism>
    <name type="scientific">Hamiltonella defensa subsp. Acyrthosiphon pisum (strain 5AT)</name>
    <dbReference type="NCBI Taxonomy" id="572265"/>
    <lineage>
        <taxon>Bacteria</taxon>
        <taxon>Pseudomonadati</taxon>
        <taxon>Pseudomonadota</taxon>
        <taxon>Gammaproteobacteria</taxon>
        <taxon>Enterobacterales</taxon>
        <taxon>Enterobacteriaceae</taxon>
        <taxon>aphid secondary symbionts</taxon>
        <taxon>Candidatus Hamiltonella</taxon>
    </lineage>
</organism>
<accession>C4K405</accession>
<comment type="function">
    <text evidence="1">Involved in iron-sulfur cluster biogenesis. Binds a 4Fe-4S cluster, can transfer this cluster to apoproteins, and thereby intervenes in the maturation of Fe/S proteins. Could also act as a scaffold/chaperone for damaged Fe/S proteins.</text>
</comment>
<comment type="cofactor">
    <cofactor evidence="1">
        <name>[4Fe-4S] cluster</name>
        <dbReference type="ChEBI" id="CHEBI:49883"/>
    </cofactor>
    <text evidence="1">Binds 1 [4Fe-4S] cluster per subunit. The cluster is presumably bound at the interface of two monomers.</text>
</comment>
<comment type="subunit">
    <text evidence="1">Homodimer.</text>
</comment>
<comment type="similarity">
    <text evidence="1">Belongs to the NfuA family.</text>
</comment>
<proteinExistence type="inferred from homology"/>
<evidence type="ECO:0000255" key="1">
    <source>
        <dbReference type="HAMAP-Rule" id="MF_01637"/>
    </source>
</evidence>
<sequence length="191" mass="20869">MITITEAAQNHFVKLLSSQPEGTQIRVFVANPGKPTAECGVSYCPADSVESADTHLKFNLFSVFVDPISAPYLNEAAIDFVTDELGSQLTLKAPNAKVRKVADDAPLIERVDYVLQSQINPQLANHGGRVTLMEITDDAFAVLQFGGGCNGCSMVDVTLKEGIEKELLQQFPELKGVKDLTEHQRGEHSFY</sequence>
<name>NFUA_HAMD5</name>